<name>RS16_BRADU</name>
<organism>
    <name type="scientific">Bradyrhizobium diazoefficiens (strain JCM 10833 / BCRC 13528 / IAM 13628 / NBRC 14792 / USDA 110)</name>
    <dbReference type="NCBI Taxonomy" id="224911"/>
    <lineage>
        <taxon>Bacteria</taxon>
        <taxon>Pseudomonadati</taxon>
        <taxon>Pseudomonadota</taxon>
        <taxon>Alphaproteobacteria</taxon>
        <taxon>Hyphomicrobiales</taxon>
        <taxon>Nitrobacteraceae</taxon>
        <taxon>Bradyrhizobium</taxon>
    </lineage>
</organism>
<reference key="1">
    <citation type="journal article" date="2002" name="DNA Res.">
        <title>Complete genomic sequence of nitrogen-fixing symbiotic bacterium Bradyrhizobium japonicum USDA110.</title>
        <authorList>
            <person name="Kaneko T."/>
            <person name="Nakamura Y."/>
            <person name="Sato S."/>
            <person name="Minamisawa K."/>
            <person name="Uchiumi T."/>
            <person name="Sasamoto S."/>
            <person name="Watanabe A."/>
            <person name="Idesawa K."/>
            <person name="Iriguchi M."/>
            <person name="Kawashima K."/>
            <person name="Kohara M."/>
            <person name="Matsumoto M."/>
            <person name="Shimpo S."/>
            <person name="Tsuruoka H."/>
            <person name="Wada T."/>
            <person name="Yamada M."/>
            <person name="Tabata S."/>
        </authorList>
    </citation>
    <scope>NUCLEOTIDE SEQUENCE [LARGE SCALE GENOMIC DNA]</scope>
    <source>
        <strain>JCM 10833 / BCRC 13528 / IAM 13628 / NBRC 14792 / USDA 110</strain>
    </source>
</reference>
<feature type="chain" id="PRO_0000167160" description="Small ribosomal subunit protein bS16">
    <location>
        <begin position="1"/>
        <end position="110"/>
    </location>
</feature>
<feature type="region of interest" description="Disordered" evidence="2">
    <location>
        <begin position="79"/>
        <end position="110"/>
    </location>
</feature>
<accession>Q89X40</accession>
<evidence type="ECO:0000255" key="1">
    <source>
        <dbReference type="HAMAP-Rule" id="MF_00385"/>
    </source>
</evidence>
<evidence type="ECO:0000256" key="2">
    <source>
        <dbReference type="SAM" id="MobiDB-lite"/>
    </source>
</evidence>
<evidence type="ECO:0000305" key="3"/>
<comment type="similarity">
    <text evidence="1">Belongs to the bacterial ribosomal protein bS16 family.</text>
</comment>
<protein>
    <recommendedName>
        <fullName evidence="1">Small ribosomal subunit protein bS16</fullName>
    </recommendedName>
    <alternativeName>
        <fullName evidence="3">30S ribosomal protein S16</fullName>
    </alternativeName>
</protein>
<keyword id="KW-1185">Reference proteome</keyword>
<keyword id="KW-0687">Ribonucleoprotein</keyword>
<keyword id="KW-0689">Ribosomal protein</keyword>
<sequence length="110" mass="12395">MSVVIRLARAGTKKRPVYHVVVADSRFPRDGRFIERLGYFNPLLPKDNEARLKLDMEKVKAWVAKGAQPSDRVSRFLDAAGVKKREARNNPQKAVPRKERKAQAEAAAKG</sequence>
<proteinExistence type="inferred from homology"/>
<dbReference type="EMBL" id="BA000040">
    <property type="protein sequence ID" value="BAC45747.1"/>
    <property type="molecule type" value="Genomic_DNA"/>
</dbReference>
<dbReference type="RefSeq" id="NP_767122.1">
    <property type="nucleotide sequence ID" value="NC_004463.1"/>
</dbReference>
<dbReference type="RefSeq" id="WP_011083313.1">
    <property type="nucleotide sequence ID" value="NZ_CP011360.1"/>
</dbReference>
<dbReference type="SMR" id="Q89X40"/>
<dbReference type="FunCoup" id="Q89X40">
    <property type="interactions" value="740"/>
</dbReference>
<dbReference type="STRING" id="224911.AAV28_41665"/>
<dbReference type="EnsemblBacteria" id="BAC45747">
    <property type="protein sequence ID" value="BAC45747"/>
    <property type="gene ID" value="BAC45747"/>
</dbReference>
<dbReference type="GeneID" id="46495627"/>
<dbReference type="KEGG" id="bja:blr0482"/>
<dbReference type="PATRIC" id="fig|224911.44.peg.9016"/>
<dbReference type="eggNOG" id="COG0228">
    <property type="taxonomic scope" value="Bacteria"/>
</dbReference>
<dbReference type="HOGENOM" id="CLU_100590_3_1_5"/>
<dbReference type="InParanoid" id="Q89X40"/>
<dbReference type="OrthoDB" id="9807878at2"/>
<dbReference type="PhylomeDB" id="Q89X40"/>
<dbReference type="Proteomes" id="UP000002526">
    <property type="component" value="Chromosome"/>
</dbReference>
<dbReference type="GO" id="GO:0005737">
    <property type="term" value="C:cytoplasm"/>
    <property type="evidence" value="ECO:0007669"/>
    <property type="project" value="UniProtKB-ARBA"/>
</dbReference>
<dbReference type="GO" id="GO:0015935">
    <property type="term" value="C:small ribosomal subunit"/>
    <property type="evidence" value="ECO:0000318"/>
    <property type="project" value="GO_Central"/>
</dbReference>
<dbReference type="GO" id="GO:0003735">
    <property type="term" value="F:structural constituent of ribosome"/>
    <property type="evidence" value="ECO:0000318"/>
    <property type="project" value="GO_Central"/>
</dbReference>
<dbReference type="GO" id="GO:0006412">
    <property type="term" value="P:translation"/>
    <property type="evidence" value="ECO:0007669"/>
    <property type="project" value="UniProtKB-UniRule"/>
</dbReference>
<dbReference type="FunFam" id="3.30.1320.10:FF:000008">
    <property type="entry name" value="30S ribosomal protein S16"/>
    <property type="match status" value="1"/>
</dbReference>
<dbReference type="Gene3D" id="3.30.1320.10">
    <property type="match status" value="1"/>
</dbReference>
<dbReference type="HAMAP" id="MF_00385">
    <property type="entry name" value="Ribosomal_bS16"/>
    <property type="match status" value="1"/>
</dbReference>
<dbReference type="InterPro" id="IPR000307">
    <property type="entry name" value="Ribosomal_bS16"/>
</dbReference>
<dbReference type="InterPro" id="IPR023803">
    <property type="entry name" value="Ribosomal_bS16_dom_sf"/>
</dbReference>
<dbReference type="NCBIfam" id="TIGR00002">
    <property type="entry name" value="S16"/>
    <property type="match status" value="1"/>
</dbReference>
<dbReference type="PANTHER" id="PTHR12919">
    <property type="entry name" value="30S RIBOSOMAL PROTEIN S16"/>
    <property type="match status" value="1"/>
</dbReference>
<dbReference type="PANTHER" id="PTHR12919:SF20">
    <property type="entry name" value="SMALL RIBOSOMAL SUBUNIT PROTEIN BS16M"/>
    <property type="match status" value="1"/>
</dbReference>
<dbReference type="Pfam" id="PF00886">
    <property type="entry name" value="Ribosomal_S16"/>
    <property type="match status" value="1"/>
</dbReference>
<dbReference type="SUPFAM" id="SSF54565">
    <property type="entry name" value="Ribosomal protein S16"/>
    <property type="match status" value="1"/>
</dbReference>
<gene>
    <name evidence="1" type="primary">rpsP</name>
    <name type="ordered locus">blr0482</name>
</gene>